<gene>
    <name type="primary">ACT2</name>
    <name type="synonym">AC2</name>
    <name type="synonym">RAC2</name>
</gene>
<dbReference type="EC" id="3.6.4.-" evidence="1"/>
<dbReference type="EMBL" id="X15864">
    <property type="protein sequence ID" value="CAA33873.1"/>
    <property type="molecule type" value="Genomic_DNA"/>
</dbReference>
<dbReference type="PIR" id="S10021">
    <property type="entry name" value="ATRZ2"/>
</dbReference>
<dbReference type="SMR" id="P0C539"/>
<dbReference type="EnsemblPlants" id="OsGoSa_10g0016930.01">
    <property type="protein sequence ID" value="OsGoSa_10g0016930.01"/>
    <property type="gene ID" value="OsGoSa_10g0016930"/>
</dbReference>
<dbReference type="EnsemblPlants" id="OsIR64_10g0016770.01">
    <property type="protein sequence ID" value="OsIR64_10g0016770.01"/>
    <property type="gene ID" value="OsIR64_10g0016770"/>
</dbReference>
<dbReference type="EnsemblPlants" id="OsKYG_10g0016380.01">
    <property type="protein sequence ID" value="OsKYG_10g0016380.01"/>
    <property type="gene ID" value="OsKYG_10g0016380"/>
</dbReference>
<dbReference type="EnsemblPlants" id="OsKYG_10g0016380.02">
    <property type="protein sequence ID" value="OsKYG_10g0016380.02"/>
    <property type="gene ID" value="OsKYG_10g0016380"/>
</dbReference>
<dbReference type="EnsemblPlants" id="OsLaMu_10g0017010.01">
    <property type="protein sequence ID" value="OsLaMu_10g0017010.01"/>
    <property type="gene ID" value="OsLaMu_10g0017010"/>
</dbReference>
<dbReference type="EnsemblPlants" id="OsLaMu_10g0017010.02">
    <property type="protein sequence ID" value="OsLaMu_10g0017010.02"/>
    <property type="gene ID" value="OsLaMu_10g0017010"/>
</dbReference>
<dbReference type="EnsemblPlants" id="OsLima_10g0016530.01">
    <property type="protein sequence ID" value="OsLima_10g0016530.01"/>
    <property type="gene ID" value="OsLima_10g0016530"/>
</dbReference>
<dbReference type="EnsemblPlants" id="OsLiXu_10g0016610.01">
    <property type="protein sequence ID" value="OsLiXu_10g0016610.01"/>
    <property type="gene ID" value="OsLiXu_10g0016610"/>
</dbReference>
<dbReference type="EnsemblPlants" id="OsMH63_10G016720_01">
    <property type="protein sequence ID" value="OsMH63_10G016720_01"/>
    <property type="gene ID" value="OsMH63_10G016720"/>
</dbReference>
<dbReference type="EnsemblPlants" id="OsMH63_10G016720_02">
    <property type="protein sequence ID" value="OsMH63_10G016720_02"/>
    <property type="gene ID" value="OsMH63_10G016720"/>
</dbReference>
<dbReference type="EnsemblPlants" id="OsZS97_10G016850_01">
    <property type="protein sequence ID" value="OsZS97_10G016850_01"/>
    <property type="gene ID" value="OsZS97_10G016850"/>
</dbReference>
<dbReference type="EnsemblPlants" id="OsZS97_10G016850_02">
    <property type="protein sequence ID" value="OsZS97_10G016850_02"/>
    <property type="gene ID" value="OsZS97_10G016850"/>
</dbReference>
<dbReference type="Gramene" id="OsGoSa_10g0016930.01">
    <property type="protein sequence ID" value="OsGoSa_10g0016930.01"/>
    <property type="gene ID" value="OsGoSa_10g0016930"/>
</dbReference>
<dbReference type="Gramene" id="OsIR64_10g0016770.01">
    <property type="protein sequence ID" value="OsIR64_10g0016770.01"/>
    <property type="gene ID" value="OsIR64_10g0016770"/>
</dbReference>
<dbReference type="Gramene" id="OsKYG_10g0016380.01">
    <property type="protein sequence ID" value="OsKYG_10g0016380.01"/>
    <property type="gene ID" value="OsKYG_10g0016380"/>
</dbReference>
<dbReference type="Gramene" id="OsKYG_10g0016380.02">
    <property type="protein sequence ID" value="OsKYG_10g0016380.02"/>
    <property type="gene ID" value="OsKYG_10g0016380"/>
</dbReference>
<dbReference type="Gramene" id="OsLaMu_10g0017010.01">
    <property type="protein sequence ID" value="OsLaMu_10g0017010.01"/>
    <property type="gene ID" value="OsLaMu_10g0017010"/>
</dbReference>
<dbReference type="Gramene" id="OsLaMu_10g0017010.02">
    <property type="protein sequence ID" value="OsLaMu_10g0017010.02"/>
    <property type="gene ID" value="OsLaMu_10g0017010"/>
</dbReference>
<dbReference type="Gramene" id="OsLima_10g0016530.01">
    <property type="protein sequence ID" value="OsLima_10g0016530.01"/>
    <property type="gene ID" value="OsLima_10g0016530"/>
</dbReference>
<dbReference type="Gramene" id="OsLiXu_10g0016610.01">
    <property type="protein sequence ID" value="OsLiXu_10g0016610.01"/>
    <property type="gene ID" value="OsLiXu_10g0016610"/>
</dbReference>
<dbReference type="Gramene" id="OsMH63_10G016720_01">
    <property type="protein sequence ID" value="OsMH63_10G016720_01"/>
    <property type="gene ID" value="OsMH63_10G016720"/>
</dbReference>
<dbReference type="Gramene" id="OsMH63_10G016720_02">
    <property type="protein sequence ID" value="OsMH63_10G016720_02"/>
    <property type="gene ID" value="OsMH63_10G016720"/>
</dbReference>
<dbReference type="Gramene" id="OsZS97_10G016850_01">
    <property type="protein sequence ID" value="OsZS97_10G016850_01"/>
    <property type="gene ID" value="OsZS97_10G016850"/>
</dbReference>
<dbReference type="Gramene" id="OsZS97_10G016850_02">
    <property type="protein sequence ID" value="OsZS97_10G016850_02"/>
    <property type="gene ID" value="OsZS97_10G016850"/>
</dbReference>
<dbReference type="OrthoDB" id="503831at2759"/>
<dbReference type="GO" id="GO:0005737">
    <property type="term" value="C:cytoplasm"/>
    <property type="evidence" value="ECO:0007669"/>
    <property type="project" value="UniProtKB-KW"/>
</dbReference>
<dbReference type="GO" id="GO:0005856">
    <property type="term" value="C:cytoskeleton"/>
    <property type="evidence" value="ECO:0007669"/>
    <property type="project" value="UniProtKB-SubCell"/>
</dbReference>
<dbReference type="GO" id="GO:0005524">
    <property type="term" value="F:ATP binding"/>
    <property type="evidence" value="ECO:0007669"/>
    <property type="project" value="UniProtKB-KW"/>
</dbReference>
<dbReference type="GO" id="GO:0016787">
    <property type="term" value="F:hydrolase activity"/>
    <property type="evidence" value="ECO:0007669"/>
    <property type="project" value="UniProtKB-KW"/>
</dbReference>
<dbReference type="CDD" id="cd10224">
    <property type="entry name" value="ASKHA_NBD_actin"/>
    <property type="match status" value="1"/>
</dbReference>
<dbReference type="FunFam" id="2.30.36.70:FF:000001">
    <property type="entry name" value="Actin, alpha skeletal muscle"/>
    <property type="match status" value="1"/>
</dbReference>
<dbReference type="FunFam" id="3.30.420.40:FF:000291">
    <property type="entry name" value="Actin, alpha skeletal muscle"/>
    <property type="match status" value="1"/>
</dbReference>
<dbReference type="FunFam" id="3.90.640.10:FF:000001">
    <property type="entry name" value="Actin, muscle"/>
    <property type="match status" value="1"/>
</dbReference>
<dbReference type="FunFam" id="3.30.420.40:FF:000404">
    <property type="entry name" value="Major actin"/>
    <property type="match status" value="1"/>
</dbReference>
<dbReference type="FunFam" id="3.30.420.40:FF:000058">
    <property type="entry name" value="Putative actin-related protein 5"/>
    <property type="match status" value="1"/>
</dbReference>
<dbReference type="Gene3D" id="3.30.420.40">
    <property type="match status" value="2"/>
</dbReference>
<dbReference type="Gene3D" id="3.90.640.10">
    <property type="entry name" value="Actin, Chain A, domain 4"/>
    <property type="match status" value="1"/>
</dbReference>
<dbReference type="InterPro" id="IPR004000">
    <property type="entry name" value="Actin"/>
</dbReference>
<dbReference type="InterPro" id="IPR020902">
    <property type="entry name" value="Actin/actin-like_CS"/>
</dbReference>
<dbReference type="InterPro" id="IPR004001">
    <property type="entry name" value="Actin_CS"/>
</dbReference>
<dbReference type="InterPro" id="IPR043129">
    <property type="entry name" value="ATPase_NBD"/>
</dbReference>
<dbReference type="PANTHER" id="PTHR11937">
    <property type="entry name" value="ACTIN"/>
    <property type="match status" value="1"/>
</dbReference>
<dbReference type="Pfam" id="PF00022">
    <property type="entry name" value="Actin"/>
    <property type="match status" value="1"/>
</dbReference>
<dbReference type="PRINTS" id="PR00190">
    <property type="entry name" value="ACTIN"/>
</dbReference>
<dbReference type="SMART" id="SM00268">
    <property type="entry name" value="ACTIN"/>
    <property type="match status" value="1"/>
</dbReference>
<dbReference type="SUPFAM" id="SSF53067">
    <property type="entry name" value="Actin-like ATPase domain"/>
    <property type="match status" value="2"/>
</dbReference>
<dbReference type="PROSITE" id="PS00406">
    <property type="entry name" value="ACTINS_1"/>
    <property type="match status" value="1"/>
</dbReference>
<dbReference type="PROSITE" id="PS00432">
    <property type="entry name" value="ACTINS_2"/>
    <property type="match status" value="1"/>
</dbReference>
<dbReference type="PROSITE" id="PS01132">
    <property type="entry name" value="ACTINS_ACT_LIKE"/>
    <property type="match status" value="1"/>
</dbReference>
<feature type="chain" id="PRO_0000291455" description="Actin-2">
    <location>
        <begin position="1"/>
        <end position="377"/>
    </location>
</feature>
<reference key="1">
    <citation type="journal article" date="1990" name="Plant Mol. Biol.">
        <title>Genomic nucleotide sequence of four rice (Oryza sativa) actin genes.</title>
        <authorList>
            <person name="Reece K.S."/>
            <person name="McElroy D."/>
            <person name="Wu R."/>
        </authorList>
    </citation>
    <scope>NUCLEOTIDE SEQUENCE [GENOMIC DNA]</scope>
    <source>
        <strain>cv. IR36</strain>
    </source>
</reference>
<reference key="2">
    <citation type="journal article" date="1990" name="Plant Mol. Biol.">
        <title>Characterization of the rice (Oryza sativa) actin gene family.</title>
        <authorList>
            <person name="McElroy D."/>
            <person name="Rothenberg M."/>
            <person name="Reece K.S."/>
            <person name="Wu R."/>
        </authorList>
    </citation>
    <scope>GENE FAMILY</scope>
</reference>
<accession>P0C539</accession>
<accession>P17298</accession>
<accession>Q0IWG7</accession>
<accession>Q7XCZ1</accession>
<accession>Q94GX5</accession>
<keyword id="KW-0067">ATP-binding</keyword>
<keyword id="KW-0963">Cytoplasm</keyword>
<keyword id="KW-0206">Cytoskeleton</keyword>
<keyword id="KW-0378">Hydrolase</keyword>
<keyword id="KW-0547">Nucleotide-binding</keyword>
<proteinExistence type="inferred from homology"/>
<name>ACT2_ORYSI</name>
<sequence>MADAEDIQPLVCDNGTGMVKAGFAGDDAPRAVFPSIVGRPRHTGVMVGMGQKDAYVGDEAQSKRGILTLKYPIEHGIVSNWDDMEKIWHHTFYNELRVAPEEHPILLTEAPLNPKANREKMTQIMFETFSVPAMYVAIQAVLSLYASGRTTGIVLDSGDGVSHTVPIYEGYALPHAILRLDLAGRDLTDSLMKILTERGYSFTTSAEREIVRDIKEKLAYVALDYEQELETAKSSSSVEKSYELPDGQVITIGAERFRCPEVMFQPSLIGMEAPGIHETTYNSIMKCDVDIRKDLYGNIVLSGGSTMFPGIADRMSKEITALAPSSMKIKVVAPPERKYSVWIGGSILASLSTFQQMWISRAEYEESGPAIVHRKCF</sequence>
<protein>
    <recommendedName>
        <fullName>Actin-2</fullName>
        <ecNumber evidence="1">3.6.4.-</ecNumber>
    </recommendedName>
</protein>
<evidence type="ECO:0000250" key="1">
    <source>
        <dbReference type="UniProtKB" id="P68137"/>
    </source>
</evidence>
<evidence type="ECO:0000305" key="2"/>
<comment type="function">
    <text>Actins are highly conserved proteins that are involved in various types of cell motility and are ubiquitously expressed in all eukaryotic cells.</text>
</comment>
<comment type="function">
    <text>Essential component of cell cytoskeleton; plays an important role in cytoplasmic streaming, cell shape determination, cell division, organelle movement and extension growth.</text>
</comment>
<comment type="catalytic activity">
    <reaction evidence="1">
        <text>ATP + H2O = ADP + phosphate + H(+)</text>
        <dbReference type="Rhea" id="RHEA:13065"/>
        <dbReference type="ChEBI" id="CHEBI:15377"/>
        <dbReference type="ChEBI" id="CHEBI:15378"/>
        <dbReference type="ChEBI" id="CHEBI:30616"/>
        <dbReference type="ChEBI" id="CHEBI:43474"/>
        <dbReference type="ChEBI" id="CHEBI:456216"/>
    </reaction>
</comment>
<comment type="subcellular location">
    <subcellularLocation>
        <location>Cytoplasm</location>
        <location>Cytoskeleton</location>
    </subcellularLocation>
</comment>
<comment type="miscellaneous">
    <text>There are at least eight actin genes in rice.</text>
</comment>
<comment type="similarity">
    <text evidence="2">Belongs to the actin family.</text>
</comment>
<organism>
    <name type="scientific">Oryza sativa subsp. indica</name>
    <name type="common">Rice</name>
    <dbReference type="NCBI Taxonomy" id="39946"/>
    <lineage>
        <taxon>Eukaryota</taxon>
        <taxon>Viridiplantae</taxon>
        <taxon>Streptophyta</taxon>
        <taxon>Embryophyta</taxon>
        <taxon>Tracheophyta</taxon>
        <taxon>Spermatophyta</taxon>
        <taxon>Magnoliopsida</taxon>
        <taxon>Liliopsida</taxon>
        <taxon>Poales</taxon>
        <taxon>Poaceae</taxon>
        <taxon>BOP clade</taxon>
        <taxon>Oryzoideae</taxon>
        <taxon>Oryzeae</taxon>
        <taxon>Oryzinae</taxon>
        <taxon>Oryza</taxon>
        <taxon>Oryza sativa</taxon>
    </lineage>
</organism>